<dbReference type="EC" id="6.3.5.-" evidence="1"/>
<dbReference type="EMBL" id="CP000804">
    <property type="protein sequence ID" value="ABU60017.1"/>
    <property type="molecule type" value="Genomic_DNA"/>
</dbReference>
<dbReference type="RefSeq" id="WP_012122440.1">
    <property type="nucleotide sequence ID" value="NC_009767.1"/>
</dbReference>
<dbReference type="SMR" id="A7NR21"/>
<dbReference type="STRING" id="383372.Rcas_3984"/>
<dbReference type="KEGG" id="rca:Rcas_3984"/>
<dbReference type="eggNOG" id="COG0721">
    <property type="taxonomic scope" value="Bacteria"/>
</dbReference>
<dbReference type="HOGENOM" id="CLU_105899_1_0_0"/>
<dbReference type="OrthoDB" id="9813938at2"/>
<dbReference type="Proteomes" id="UP000000263">
    <property type="component" value="Chromosome"/>
</dbReference>
<dbReference type="GO" id="GO:0050566">
    <property type="term" value="F:asparaginyl-tRNA synthase (glutamine-hydrolyzing) activity"/>
    <property type="evidence" value="ECO:0007669"/>
    <property type="project" value="RHEA"/>
</dbReference>
<dbReference type="GO" id="GO:0005524">
    <property type="term" value="F:ATP binding"/>
    <property type="evidence" value="ECO:0007669"/>
    <property type="project" value="UniProtKB-KW"/>
</dbReference>
<dbReference type="GO" id="GO:0050567">
    <property type="term" value="F:glutaminyl-tRNA synthase (glutamine-hydrolyzing) activity"/>
    <property type="evidence" value="ECO:0007669"/>
    <property type="project" value="UniProtKB-UniRule"/>
</dbReference>
<dbReference type="GO" id="GO:0070681">
    <property type="term" value="P:glutaminyl-tRNAGln biosynthesis via transamidation"/>
    <property type="evidence" value="ECO:0007669"/>
    <property type="project" value="TreeGrafter"/>
</dbReference>
<dbReference type="GO" id="GO:0006450">
    <property type="term" value="P:regulation of translational fidelity"/>
    <property type="evidence" value="ECO:0007669"/>
    <property type="project" value="InterPro"/>
</dbReference>
<dbReference type="GO" id="GO:0006412">
    <property type="term" value="P:translation"/>
    <property type="evidence" value="ECO:0007669"/>
    <property type="project" value="UniProtKB-UniRule"/>
</dbReference>
<dbReference type="Gene3D" id="1.10.20.60">
    <property type="entry name" value="Glu-tRNAGln amidotransferase C subunit, N-terminal domain"/>
    <property type="match status" value="1"/>
</dbReference>
<dbReference type="HAMAP" id="MF_00122">
    <property type="entry name" value="GatC"/>
    <property type="match status" value="1"/>
</dbReference>
<dbReference type="InterPro" id="IPR036113">
    <property type="entry name" value="Asp/Glu-ADT_sf_sub_c"/>
</dbReference>
<dbReference type="InterPro" id="IPR003837">
    <property type="entry name" value="GatC"/>
</dbReference>
<dbReference type="NCBIfam" id="TIGR00135">
    <property type="entry name" value="gatC"/>
    <property type="match status" value="1"/>
</dbReference>
<dbReference type="PANTHER" id="PTHR15004">
    <property type="entry name" value="GLUTAMYL-TRNA(GLN) AMIDOTRANSFERASE SUBUNIT C, MITOCHONDRIAL"/>
    <property type="match status" value="1"/>
</dbReference>
<dbReference type="PANTHER" id="PTHR15004:SF0">
    <property type="entry name" value="GLUTAMYL-TRNA(GLN) AMIDOTRANSFERASE SUBUNIT C, MITOCHONDRIAL"/>
    <property type="match status" value="1"/>
</dbReference>
<dbReference type="Pfam" id="PF02686">
    <property type="entry name" value="GatC"/>
    <property type="match status" value="1"/>
</dbReference>
<dbReference type="SUPFAM" id="SSF141000">
    <property type="entry name" value="Glu-tRNAGln amidotransferase C subunit"/>
    <property type="match status" value="1"/>
</dbReference>
<evidence type="ECO:0000255" key="1">
    <source>
        <dbReference type="HAMAP-Rule" id="MF_00122"/>
    </source>
</evidence>
<keyword id="KW-0067">ATP-binding</keyword>
<keyword id="KW-0436">Ligase</keyword>
<keyword id="KW-0547">Nucleotide-binding</keyword>
<keyword id="KW-0648">Protein biosynthesis</keyword>
<keyword id="KW-1185">Reference proteome</keyword>
<accession>A7NR21</accession>
<name>GATC_ROSCS</name>
<organism>
    <name type="scientific">Roseiflexus castenholzii (strain DSM 13941 / HLO8)</name>
    <dbReference type="NCBI Taxonomy" id="383372"/>
    <lineage>
        <taxon>Bacteria</taxon>
        <taxon>Bacillati</taxon>
        <taxon>Chloroflexota</taxon>
        <taxon>Chloroflexia</taxon>
        <taxon>Chloroflexales</taxon>
        <taxon>Roseiflexineae</taxon>
        <taxon>Roseiflexaceae</taxon>
        <taxon>Roseiflexus</taxon>
    </lineage>
</organism>
<feature type="chain" id="PRO_1000076194" description="Aspartyl/glutamyl-tRNA(Asn/Gln) amidotransferase subunit C">
    <location>
        <begin position="1"/>
        <end position="98"/>
    </location>
</feature>
<sequence length="98" mass="11279">MLLTMEDVEHVARLARLRLSPDELEHMRDQLSKILDHFQMLQQIDVSAVPPTAQVTDLINVMREDEVRPSLPREQALANAPEQQDGMFRVRAIFEEAS</sequence>
<protein>
    <recommendedName>
        <fullName evidence="1">Aspartyl/glutamyl-tRNA(Asn/Gln) amidotransferase subunit C</fullName>
        <shortName evidence="1">Asp/Glu-ADT subunit C</shortName>
        <ecNumber evidence="1">6.3.5.-</ecNumber>
    </recommendedName>
</protein>
<comment type="function">
    <text evidence="1">Allows the formation of correctly charged Asn-tRNA(Asn) or Gln-tRNA(Gln) through the transamidation of misacylated Asp-tRNA(Asn) or Glu-tRNA(Gln) in organisms which lack either or both of asparaginyl-tRNA or glutaminyl-tRNA synthetases. The reaction takes place in the presence of glutamine and ATP through an activated phospho-Asp-tRNA(Asn) or phospho-Glu-tRNA(Gln).</text>
</comment>
<comment type="catalytic activity">
    <reaction evidence="1">
        <text>L-glutamyl-tRNA(Gln) + L-glutamine + ATP + H2O = L-glutaminyl-tRNA(Gln) + L-glutamate + ADP + phosphate + H(+)</text>
        <dbReference type="Rhea" id="RHEA:17521"/>
        <dbReference type="Rhea" id="RHEA-COMP:9681"/>
        <dbReference type="Rhea" id="RHEA-COMP:9684"/>
        <dbReference type="ChEBI" id="CHEBI:15377"/>
        <dbReference type="ChEBI" id="CHEBI:15378"/>
        <dbReference type="ChEBI" id="CHEBI:29985"/>
        <dbReference type="ChEBI" id="CHEBI:30616"/>
        <dbReference type="ChEBI" id="CHEBI:43474"/>
        <dbReference type="ChEBI" id="CHEBI:58359"/>
        <dbReference type="ChEBI" id="CHEBI:78520"/>
        <dbReference type="ChEBI" id="CHEBI:78521"/>
        <dbReference type="ChEBI" id="CHEBI:456216"/>
    </reaction>
</comment>
<comment type="catalytic activity">
    <reaction evidence="1">
        <text>L-aspartyl-tRNA(Asn) + L-glutamine + ATP + H2O = L-asparaginyl-tRNA(Asn) + L-glutamate + ADP + phosphate + 2 H(+)</text>
        <dbReference type="Rhea" id="RHEA:14513"/>
        <dbReference type="Rhea" id="RHEA-COMP:9674"/>
        <dbReference type="Rhea" id="RHEA-COMP:9677"/>
        <dbReference type="ChEBI" id="CHEBI:15377"/>
        <dbReference type="ChEBI" id="CHEBI:15378"/>
        <dbReference type="ChEBI" id="CHEBI:29985"/>
        <dbReference type="ChEBI" id="CHEBI:30616"/>
        <dbReference type="ChEBI" id="CHEBI:43474"/>
        <dbReference type="ChEBI" id="CHEBI:58359"/>
        <dbReference type="ChEBI" id="CHEBI:78515"/>
        <dbReference type="ChEBI" id="CHEBI:78516"/>
        <dbReference type="ChEBI" id="CHEBI:456216"/>
    </reaction>
</comment>
<comment type="subunit">
    <text evidence="1">Heterotrimer of A, B and C subunits.</text>
</comment>
<comment type="similarity">
    <text evidence="1">Belongs to the GatC family.</text>
</comment>
<gene>
    <name evidence="1" type="primary">gatC</name>
    <name type="ordered locus">Rcas_3984</name>
</gene>
<proteinExistence type="inferred from homology"/>
<reference key="1">
    <citation type="submission" date="2007-08" db="EMBL/GenBank/DDBJ databases">
        <title>Complete sequence of Roseiflexus castenholzii DSM 13941.</title>
        <authorList>
            <consortium name="US DOE Joint Genome Institute"/>
            <person name="Copeland A."/>
            <person name="Lucas S."/>
            <person name="Lapidus A."/>
            <person name="Barry K."/>
            <person name="Glavina del Rio T."/>
            <person name="Dalin E."/>
            <person name="Tice H."/>
            <person name="Pitluck S."/>
            <person name="Thompson L.S."/>
            <person name="Brettin T."/>
            <person name="Bruce D."/>
            <person name="Detter J.C."/>
            <person name="Han C."/>
            <person name="Tapia R."/>
            <person name="Schmutz J."/>
            <person name="Larimer F."/>
            <person name="Land M."/>
            <person name="Hauser L."/>
            <person name="Kyrpides N."/>
            <person name="Mikhailova N."/>
            <person name="Bryant D.A."/>
            <person name="Hanada S."/>
            <person name="Tsukatani Y."/>
            <person name="Richardson P."/>
        </authorList>
    </citation>
    <scope>NUCLEOTIDE SEQUENCE [LARGE SCALE GENOMIC DNA]</scope>
    <source>
        <strain>DSM 13941 / HLO8</strain>
    </source>
</reference>